<protein>
    <recommendedName>
        <fullName evidence="1">Putative membrane protein insertion efficiency factor</fullName>
    </recommendedName>
</protein>
<accession>C3KWJ8</accession>
<dbReference type="EMBL" id="CP001083">
    <property type="protein sequence ID" value="ACQ53496.1"/>
    <property type="molecule type" value="Genomic_DNA"/>
</dbReference>
<dbReference type="KEGG" id="cbi:CLJ_B3985"/>
<dbReference type="HOGENOM" id="CLU_144811_6_0_9"/>
<dbReference type="Proteomes" id="UP000002333">
    <property type="component" value="Chromosome"/>
</dbReference>
<dbReference type="GO" id="GO:0005886">
    <property type="term" value="C:plasma membrane"/>
    <property type="evidence" value="ECO:0007669"/>
    <property type="project" value="UniProtKB-SubCell"/>
</dbReference>
<dbReference type="HAMAP" id="MF_00386">
    <property type="entry name" value="UPF0161_YidD"/>
    <property type="match status" value="1"/>
</dbReference>
<dbReference type="InterPro" id="IPR002696">
    <property type="entry name" value="Membr_insert_effic_factor_YidD"/>
</dbReference>
<dbReference type="NCBIfam" id="TIGR00278">
    <property type="entry name" value="membrane protein insertion efficiency factor YidD"/>
    <property type="match status" value="1"/>
</dbReference>
<dbReference type="PANTHER" id="PTHR33383">
    <property type="entry name" value="MEMBRANE PROTEIN INSERTION EFFICIENCY FACTOR-RELATED"/>
    <property type="match status" value="1"/>
</dbReference>
<dbReference type="PANTHER" id="PTHR33383:SF1">
    <property type="entry name" value="MEMBRANE PROTEIN INSERTION EFFICIENCY FACTOR-RELATED"/>
    <property type="match status" value="1"/>
</dbReference>
<dbReference type="Pfam" id="PF01809">
    <property type="entry name" value="YidD"/>
    <property type="match status" value="1"/>
</dbReference>
<dbReference type="SMART" id="SM01234">
    <property type="entry name" value="Haemolytic"/>
    <property type="match status" value="1"/>
</dbReference>
<name>YIDD_CLOB6</name>
<evidence type="ECO:0000255" key="1">
    <source>
        <dbReference type="HAMAP-Rule" id="MF_00386"/>
    </source>
</evidence>
<organism>
    <name type="scientific">Clostridium botulinum (strain 657 / Type Ba4)</name>
    <dbReference type="NCBI Taxonomy" id="515621"/>
    <lineage>
        <taxon>Bacteria</taxon>
        <taxon>Bacillati</taxon>
        <taxon>Bacillota</taxon>
        <taxon>Clostridia</taxon>
        <taxon>Eubacteriales</taxon>
        <taxon>Clostridiaceae</taxon>
        <taxon>Clostridium</taxon>
    </lineage>
</organism>
<gene>
    <name type="ordered locus">CLJ_B3985</name>
</gene>
<proteinExistence type="inferred from homology"/>
<keyword id="KW-1003">Cell membrane</keyword>
<keyword id="KW-0472">Membrane</keyword>
<reference key="1">
    <citation type="submission" date="2008-05" db="EMBL/GenBank/DDBJ databases">
        <title>Genome sequence of Clostridium botulinum Ba4 strain 657.</title>
        <authorList>
            <person name="Shrivastava S."/>
            <person name="Brown J.L."/>
            <person name="Bruce D."/>
            <person name="Detter C."/>
            <person name="Munk C."/>
            <person name="Smith L.A."/>
            <person name="Smith T.J."/>
            <person name="Sutton G."/>
            <person name="Brettin T.S."/>
        </authorList>
    </citation>
    <scope>NUCLEOTIDE SEQUENCE [LARGE SCALE GENOMIC DNA]</scope>
    <source>
        <strain>657 / Type Ba4</strain>
    </source>
</reference>
<comment type="function">
    <text evidence="1">Could be involved in insertion of integral membrane proteins into the membrane.</text>
</comment>
<comment type="subcellular location">
    <subcellularLocation>
        <location evidence="1">Cell membrane</location>
        <topology evidence="1">Peripheral membrane protein</topology>
        <orientation evidence="1">Cytoplasmic side</orientation>
    </subcellularLocation>
</comment>
<comment type="similarity">
    <text evidence="1">Belongs to the UPF0161 family.</text>
</comment>
<feature type="chain" id="PRO_1000205778" description="Putative membrane protein insertion efficiency factor">
    <location>
        <begin position="1"/>
        <end position="69"/>
    </location>
</feature>
<sequence length="69" mass="8021">MKNLLICIIKMYRKYISSLKRPSCRFYPTCSQYSIEAIEKYGALKGTLISIKRILKCHPFNEGGYDPVK</sequence>